<name>MTGB_DESHY</name>
<evidence type="ECO:0000269" key="1">
    <source>
    </source>
</evidence>
<evidence type="ECO:0000303" key="2">
    <source>
    </source>
</evidence>
<evidence type="ECO:0000305" key="3"/>
<evidence type="ECO:0000305" key="4">
    <source>
    </source>
</evidence>
<evidence type="ECO:0000312" key="5">
    <source>
        <dbReference type="EMBL" id="BAE84945.1"/>
    </source>
</evidence>
<evidence type="ECO:0007744" key="6">
    <source>
        <dbReference type="PDB" id="2QNE"/>
    </source>
</evidence>
<evidence type="ECO:0007829" key="7">
    <source>
        <dbReference type="PDB" id="2QNE"/>
    </source>
</evidence>
<sequence>MGQLLPKYNILTEDQVQKIHENTMKILEEIGIEFEYEPALEVFRREGQKVEGKRVYLTREFVESKLKSAPAEFTLHARNPENNVVIGGDNIVFMPGYGAPFIYELDGSRRKTTLQDYENFAKLAGASKNMHLSGGTMAEPQDIPDGVRHLQMLYSSIKNSDKCFMGSAEGKERAEDSVEIAAILFGGKDVIKEKPVLVSLINSLTPLKYDERMLGALMAYAEAGQAVIIASLVMAGSTGPASLAGTLSLQNAEVLAGISLAQSINPGTPVIYGSTSALSDMRSGSLSIGSPECALFISASAQLARFYGVPSRSGGGLNDSKTVDAQAGYESMMTLMAANLTGVNFVLHTAGILQYFMAMSYEKFIMDDEIAGMLLHYMKGYTFDEDGMAFDVIEKVGPGGHFLTQKHTRKNHKREFYTPTLSDRSAYDTWAKEKLETKQRAHARWQQILANYVPPALDPEIDAKLQAFIAQRGKEVGEE</sequence>
<feature type="chain" id="PRO_0000441377" description="Glycine betaine methyltransferase">
    <location>
        <begin position="1"/>
        <end position="479"/>
    </location>
</feature>
<feature type="helix" evidence="7">
    <location>
        <begin position="13"/>
        <end position="29"/>
    </location>
</feature>
<feature type="strand" evidence="7">
    <location>
        <begin position="32"/>
        <end position="34"/>
    </location>
</feature>
<feature type="helix" evidence="7">
    <location>
        <begin position="37"/>
        <end position="45"/>
    </location>
</feature>
<feature type="strand" evidence="7">
    <location>
        <begin position="49"/>
        <end position="51"/>
    </location>
</feature>
<feature type="strand" evidence="7">
    <location>
        <begin position="54"/>
        <end position="56"/>
    </location>
</feature>
<feature type="helix" evidence="7">
    <location>
        <begin position="59"/>
        <end position="66"/>
    </location>
</feature>
<feature type="strand" evidence="7">
    <location>
        <begin position="73"/>
        <end position="75"/>
    </location>
</feature>
<feature type="helix" evidence="7">
    <location>
        <begin position="80"/>
        <end position="82"/>
    </location>
</feature>
<feature type="strand" evidence="7">
    <location>
        <begin position="84"/>
        <end position="89"/>
    </location>
</feature>
<feature type="strand" evidence="7">
    <location>
        <begin position="92"/>
        <end position="95"/>
    </location>
</feature>
<feature type="strand" evidence="7">
    <location>
        <begin position="101"/>
        <end position="103"/>
    </location>
</feature>
<feature type="strand" evidence="7">
    <location>
        <begin position="109"/>
        <end position="111"/>
    </location>
</feature>
<feature type="helix" evidence="7">
    <location>
        <begin position="114"/>
        <end position="126"/>
    </location>
</feature>
<feature type="strand" evidence="7">
    <location>
        <begin position="131"/>
        <end position="135"/>
    </location>
</feature>
<feature type="turn" evidence="7">
    <location>
        <begin position="145"/>
        <end position="147"/>
    </location>
</feature>
<feature type="helix" evidence="7">
    <location>
        <begin position="148"/>
        <end position="159"/>
    </location>
</feature>
<feature type="strand" evidence="7">
    <location>
        <begin position="161"/>
        <end position="165"/>
    </location>
</feature>
<feature type="helix" evidence="7">
    <location>
        <begin position="171"/>
        <end position="185"/>
    </location>
</feature>
<feature type="helix" evidence="7">
    <location>
        <begin position="188"/>
        <end position="193"/>
    </location>
</feature>
<feature type="strand" evidence="7">
    <location>
        <begin position="198"/>
        <end position="202"/>
    </location>
</feature>
<feature type="turn" evidence="7">
    <location>
        <begin position="205"/>
        <end position="207"/>
    </location>
</feature>
<feature type="helix" evidence="7">
    <location>
        <begin position="211"/>
        <end position="222"/>
    </location>
</feature>
<feature type="strand" evidence="7">
    <location>
        <begin position="226"/>
        <end position="231"/>
    </location>
</feature>
<feature type="turn" evidence="7">
    <location>
        <begin position="236"/>
        <end position="238"/>
    </location>
</feature>
<feature type="helix" evidence="7">
    <location>
        <begin position="243"/>
        <end position="264"/>
    </location>
</feature>
<feature type="strand" evidence="7">
    <location>
        <begin position="270"/>
        <end position="274"/>
    </location>
</feature>
<feature type="strand" evidence="7">
    <location>
        <begin position="277"/>
        <end position="279"/>
    </location>
</feature>
<feature type="turn" evidence="7">
    <location>
        <begin position="281"/>
        <end position="283"/>
    </location>
</feature>
<feature type="strand" evidence="7">
    <location>
        <begin position="285"/>
        <end position="287"/>
    </location>
</feature>
<feature type="helix" evidence="7">
    <location>
        <begin position="291"/>
        <end position="307"/>
    </location>
</feature>
<feature type="strand" evidence="7">
    <location>
        <begin position="311"/>
        <end position="313"/>
    </location>
</feature>
<feature type="strand" evidence="7">
    <location>
        <begin position="321"/>
        <end position="324"/>
    </location>
</feature>
<feature type="helix" evidence="7">
    <location>
        <begin position="325"/>
        <end position="340"/>
    </location>
</feature>
<feature type="strand" evidence="7">
    <location>
        <begin position="344"/>
        <end position="353"/>
    </location>
</feature>
<feature type="helix" evidence="7">
    <location>
        <begin position="354"/>
        <end position="356"/>
    </location>
</feature>
<feature type="helix" evidence="7">
    <location>
        <begin position="361"/>
        <end position="379"/>
    </location>
</feature>
<feature type="helix" evidence="7">
    <location>
        <begin position="385"/>
        <end position="388"/>
    </location>
</feature>
<feature type="helix" evidence="7">
    <location>
        <begin position="390"/>
        <end position="396"/>
    </location>
</feature>
<feature type="helix" evidence="7">
    <location>
        <begin position="406"/>
        <end position="415"/>
    </location>
</feature>
<feature type="helix" evidence="7">
    <location>
        <begin position="427"/>
        <end position="430"/>
    </location>
</feature>
<feature type="turn" evidence="7">
    <location>
        <begin position="431"/>
        <end position="433"/>
    </location>
</feature>
<feature type="helix" evidence="7">
    <location>
        <begin position="437"/>
        <end position="451"/>
    </location>
</feature>
<feature type="helix" evidence="7">
    <location>
        <begin position="459"/>
        <end position="476"/>
    </location>
</feature>
<proteinExistence type="evidence at protein level"/>
<organism>
    <name type="scientific">Desulfitobacterium hafniense (strain Y51)</name>
    <dbReference type="NCBI Taxonomy" id="138119"/>
    <lineage>
        <taxon>Bacteria</taxon>
        <taxon>Bacillati</taxon>
        <taxon>Bacillota</taxon>
        <taxon>Clostridia</taxon>
        <taxon>Eubacteriales</taxon>
        <taxon>Desulfitobacteriaceae</taxon>
        <taxon>Desulfitobacterium</taxon>
    </lineage>
</organism>
<reference key="1">
    <citation type="journal article" date="2006" name="J. Bacteriol.">
        <title>Complete genome sequence of the dehalorespiring bacterium Desulfitobacterium hafniense Y51 and comparison with Dehalococcoides ethenogenes 195.</title>
        <authorList>
            <person name="Nonaka H."/>
            <person name="Keresztes G."/>
            <person name="Shinoda Y."/>
            <person name="Ikenaga Y."/>
            <person name="Abe M."/>
            <person name="Naito K."/>
            <person name="Inatomi K."/>
            <person name="Furukawa K."/>
            <person name="Inui M."/>
            <person name="Yukawa H."/>
        </authorList>
    </citation>
    <scope>NUCLEOTIDE SEQUENCE [LARGE SCALE GENOMIC DNA]</scope>
    <source>
        <strain>Y51</strain>
    </source>
</reference>
<reference key="2">
    <citation type="journal article" date="2014" name="Proc. Natl. Acad. Sci. U.S.A.">
        <title>A nonpyrrolysine member of the widely distributed trimethylamine methyltransferase family is a glycine betaine methyltransferase.</title>
        <authorList>
            <person name="Ticak T."/>
            <person name="Kountz D.J."/>
            <person name="Girosky K.E."/>
            <person name="Krzycki J.A."/>
            <person name="Ferguson D.J. Jr."/>
        </authorList>
    </citation>
    <scope>FUNCTION</scope>
    <scope>CATALYTIC ACTIVITY</scope>
    <scope>BIOPHYSICOCHEMICAL PROPERTIES</scope>
    <scope>SUBSTRATE SPECIFICITY</scope>
    <scope>INDUCTION</scope>
    <source>
        <strain>Y51</strain>
    </source>
</reference>
<reference evidence="6" key="3">
    <citation type="submission" date="2007-07" db="PDB data bank">
        <title>Crystal structure of putative methyltransferase (ZP_00558420.1) from Desulfitobacterium hafniense Y51 at 2.30 A resolution.</title>
        <authorList>
            <consortium name="Joint Center for Structural Genomics (JCSG)"/>
        </authorList>
    </citation>
    <scope>X-RAY CRYSTALLOGRAPHY (2.30 ANGSTROMS) OF 4-479</scope>
</reference>
<dbReference type="EC" id="2.1.1.376" evidence="1"/>
<dbReference type="EMBL" id="AP008230">
    <property type="protein sequence ID" value="BAE84945.1"/>
    <property type="molecule type" value="Genomic_DNA"/>
</dbReference>
<dbReference type="PDB" id="2QNE">
    <property type="method" value="X-ray"/>
    <property type="resolution" value="2.30 A"/>
    <property type="chains" value="A/B=4-479"/>
</dbReference>
<dbReference type="PDBsum" id="2QNE"/>
<dbReference type="SMR" id="Q24SP7"/>
<dbReference type="STRING" id="138119.DSY3156"/>
<dbReference type="KEGG" id="dsy:DSY3156"/>
<dbReference type="eggNOG" id="COG5598">
    <property type="taxonomic scope" value="Bacteria"/>
</dbReference>
<dbReference type="HOGENOM" id="CLU_033581_0_0_9"/>
<dbReference type="BRENDA" id="2.1.1.376">
    <property type="organism ID" value="1880"/>
</dbReference>
<dbReference type="EvolutionaryTrace" id="Q24SP7"/>
<dbReference type="Proteomes" id="UP000001946">
    <property type="component" value="Chromosome"/>
</dbReference>
<dbReference type="GO" id="GO:0008168">
    <property type="term" value="F:methyltransferase activity"/>
    <property type="evidence" value="ECO:0007669"/>
    <property type="project" value="UniProtKB-KW"/>
</dbReference>
<dbReference type="GO" id="GO:0015948">
    <property type="term" value="P:methanogenesis"/>
    <property type="evidence" value="ECO:0007669"/>
    <property type="project" value="InterPro"/>
</dbReference>
<dbReference type="GO" id="GO:0032259">
    <property type="term" value="P:methylation"/>
    <property type="evidence" value="ECO:0007669"/>
    <property type="project" value="UniProtKB-KW"/>
</dbReference>
<dbReference type="GO" id="GO:0006730">
    <property type="term" value="P:one-carbon metabolic process"/>
    <property type="evidence" value="ECO:0007669"/>
    <property type="project" value="UniProtKB-KW"/>
</dbReference>
<dbReference type="Gene3D" id="3.20.20.480">
    <property type="entry name" value="Trimethylamine methyltransferase-like"/>
    <property type="match status" value="1"/>
</dbReference>
<dbReference type="InterPro" id="IPR038601">
    <property type="entry name" value="MttB-like_sf"/>
</dbReference>
<dbReference type="InterPro" id="IPR010426">
    <property type="entry name" value="MTTB_MeTrfase"/>
</dbReference>
<dbReference type="Pfam" id="PF06253">
    <property type="entry name" value="MTTB"/>
    <property type="match status" value="1"/>
</dbReference>
<dbReference type="PIRSF" id="PIRSF037567">
    <property type="entry name" value="MTTB_MeTrfase"/>
    <property type="match status" value="1"/>
</dbReference>
<protein>
    <recommendedName>
        <fullName evidence="2">Glycine betaine methyltransferase</fullName>
        <shortName evidence="2">GB methyltransferase</shortName>
        <ecNumber evidence="1">2.1.1.376</ecNumber>
    </recommendedName>
    <alternativeName>
        <fullName evidence="4">Glycine betaine--corrinoid protein Co-methyltransferase</fullName>
    </alternativeName>
    <alternativeName>
        <fullName evidence="2">Glycine betaine:cob(I)alamin methyltransferase</fullName>
    </alternativeName>
    <alternativeName>
        <fullName evidence="2">Glycine betaine:corrinoid methyltransferase</fullName>
    </alternativeName>
</protein>
<gene>
    <name evidence="2" type="primary">mtgB</name>
    <name evidence="5" type="ordered locus">DSY3156</name>
</gene>
<accession>Q24SP7</accession>
<keyword id="KW-0002">3D-structure</keyword>
<keyword id="KW-0489">Methyltransferase</keyword>
<keyword id="KW-0554">One-carbon metabolism</keyword>
<keyword id="KW-1185">Reference proteome</keyword>
<keyword id="KW-0808">Transferase</keyword>
<comment type="function">
    <text evidence="1">Methyltransferase able to methylate free cob(I)alamin in vitro, using glycine betaine as the methyl donor, yealding methylcobalamin (methylCbl) and dimethylglycine. In vivo, probably carries out the methylation of a corrinoid protein, likely the adjacently encoded DSY3155, with glycine betaine, to then supply methyl groups to tetrahydrofolate (THF) for ultimate conversion to carbon dioxide; oxidation of the methyl group would also provide reducing equivalents for anaerobic respiration. Thus, may function in the pathway that allows anaerobic methylotrophic growth of D.hafniense using glycine betaine. Cannot use quaternary amines such as carnitine and choline as substrates, nor tertiary amines such as dimethylglycine or trimethylamine.</text>
</comment>
<comment type="catalytic activity">
    <reaction evidence="1">
        <text>Co(I)-[glycine betaine-specific corrinoid protein] + glycine betaine + H(+) = methyl-Co(III)-[glycine betaine-specific corrinoid protein] + N,N-dimethylglycine</text>
        <dbReference type="Rhea" id="RHEA:65996"/>
        <dbReference type="Rhea" id="RHEA-COMP:16947"/>
        <dbReference type="Rhea" id="RHEA-COMP:16948"/>
        <dbReference type="ChEBI" id="CHEBI:15378"/>
        <dbReference type="ChEBI" id="CHEBI:17750"/>
        <dbReference type="ChEBI" id="CHEBI:58251"/>
        <dbReference type="ChEBI" id="CHEBI:85033"/>
        <dbReference type="ChEBI" id="CHEBI:85035"/>
        <dbReference type="EC" id="2.1.1.376"/>
    </reaction>
</comment>
<comment type="biophysicochemical properties">
    <kinetics>
        <KM evidence="1">1.96 mM for glycine betaine</KM>
        <Vmax evidence="1">1.49 umol/min/mg enzyme for the methylation of free cob(I)alamin with glycine betaine</Vmax>
    </kinetics>
</comment>
<comment type="induction">
    <text evidence="1">Highly up-regulated during growth on glycine betaine.</text>
</comment>
<comment type="miscellaneous">
    <text evidence="4">In contrast to a small clade of this large protein family whose members have trimethylamine:corrinoid methyltransferase activity and have a genetically encoded pyrrolysine residue essential for catalysis, MtgB lacks pyrrolysine and uses a quaternary amine as substrate.</text>
</comment>
<comment type="similarity">
    <text evidence="3">Belongs to the trimethylamine methyltransferase family.</text>
</comment>